<protein>
    <recommendedName>
        <fullName>Uncharacterized protein AF_0297</fullName>
    </recommendedName>
</protein>
<feature type="chain" id="PRO_0000127862" description="Uncharacterized protein AF_0297">
    <location>
        <begin position="1"/>
        <end position="36"/>
    </location>
</feature>
<gene>
    <name type="ordered locus">AF_0297</name>
</gene>
<dbReference type="EMBL" id="AE000782">
    <property type="protein sequence ID" value="AAB90940.1"/>
    <property type="molecule type" value="Genomic_DNA"/>
</dbReference>
<dbReference type="PIR" id="A69287">
    <property type="entry name" value="A69287"/>
</dbReference>
<dbReference type="STRING" id="224325.AF_0297"/>
<dbReference type="PaxDb" id="224325-AF_0297"/>
<dbReference type="EnsemblBacteria" id="AAB90940">
    <property type="protein sequence ID" value="AAB90940"/>
    <property type="gene ID" value="AF_0297"/>
</dbReference>
<dbReference type="KEGG" id="afu:AF_0297"/>
<dbReference type="HOGENOM" id="CLU_3353792_0_0_2"/>
<dbReference type="Proteomes" id="UP000002199">
    <property type="component" value="Chromosome"/>
</dbReference>
<keyword id="KW-1185">Reference proteome</keyword>
<name>Y297_ARCFU</name>
<organism>
    <name type="scientific">Archaeoglobus fulgidus (strain ATCC 49558 / DSM 4304 / JCM 9628 / NBRC 100126 / VC-16)</name>
    <dbReference type="NCBI Taxonomy" id="224325"/>
    <lineage>
        <taxon>Archaea</taxon>
        <taxon>Methanobacteriati</taxon>
        <taxon>Methanobacteriota</taxon>
        <taxon>Archaeoglobi</taxon>
        <taxon>Archaeoglobales</taxon>
        <taxon>Archaeoglobaceae</taxon>
        <taxon>Archaeoglobus</taxon>
    </lineage>
</organism>
<sequence>MDAPDPEKPIEVYLNEKKVAEIVIRKAETKVTKRHL</sequence>
<accession>O29945</accession>
<proteinExistence type="predicted"/>
<reference key="1">
    <citation type="journal article" date="1997" name="Nature">
        <title>The complete genome sequence of the hyperthermophilic, sulphate-reducing archaeon Archaeoglobus fulgidus.</title>
        <authorList>
            <person name="Klenk H.-P."/>
            <person name="Clayton R.A."/>
            <person name="Tomb J.-F."/>
            <person name="White O."/>
            <person name="Nelson K.E."/>
            <person name="Ketchum K.A."/>
            <person name="Dodson R.J."/>
            <person name="Gwinn M.L."/>
            <person name="Hickey E.K."/>
            <person name="Peterson J.D."/>
            <person name="Richardson D.L."/>
            <person name="Kerlavage A.R."/>
            <person name="Graham D.E."/>
            <person name="Kyrpides N.C."/>
            <person name="Fleischmann R.D."/>
            <person name="Quackenbush J."/>
            <person name="Lee N.H."/>
            <person name="Sutton G.G."/>
            <person name="Gill S.R."/>
            <person name="Kirkness E.F."/>
            <person name="Dougherty B.A."/>
            <person name="McKenney K."/>
            <person name="Adams M.D."/>
            <person name="Loftus B.J."/>
            <person name="Peterson S.N."/>
            <person name="Reich C.I."/>
            <person name="McNeil L.K."/>
            <person name="Badger J.H."/>
            <person name="Glodek A."/>
            <person name="Zhou L."/>
            <person name="Overbeek R."/>
            <person name="Gocayne J.D."/>
            <person name="Weidman J.F."/>
            <person name="McDonald L.A."/>
            <person name="Utterback T.R."/>
            <person name="Cotton M.D."/>
            <person name="Spriggs T."/>
            <person name="Artiach P."/>
            <person name="Kaine B.P."/>
            <person name="Sykes S.M."/>
            <person name="Sadow P.W."/>
            <person name="D'Andrea K.P."/>
            <person name="Bowman C."/>
            <person name="Fujii C."/>
            <person name="Garland S.A."/>
            <person name="Mason T.M."/>
            <person name="Olsen G.J."/>
            <person name="Fraser C.M."/>
            <person name="Smith H.O."/>
            <person name="Woese C.R."/>
            <person name="Venter J.C."/>
        </authorList>
    </citation>
    <scope>NUCLEOTIDE SEQUENCE [LARGE SCALE GENOMIC DNA]</scope>
    <source>
        <strain>ATCC 49558 / DSM 4304 / JCM 9628 / NBRC 100126 / VC-16</strain>
    </source>
</reference>